<name>FTHS1_STRPM</name>
<dbReference type="EC" id="6.3.4.3" evidence="1"/>
<dbReference type="EMBL" id="CP000056">
    <property type="protein sequence ID" value="AAX72012.1"/>
    <property type="molecule type" value="Genomic_DNA"/>
</dbReference>
<dbReference type="RefSeq" id="WP_011284813.1">
    <property type="nucleotide sequence ID" value="NC_007296.2"/>
</dbReference>
<dbReference type="SMR" id="Q48TE8"/>
<dbReference type="KEGG" id="spb:M28_Spy0899"/>
<dbReference type="HOGENOM" id="CLU_003601_3_3_9"/>
<dbReference type="UniPathway" id="UPA00193"/>
<dbReference type="GO" id="GO:0005524">
    <property type="term" value="F:ATP binding"/>
    <property type="evidence" value="ECO:0007669"/>
    <property type="project" value="UniProtKB-UniRule"/>
</dbReference>
<dbReference type="GO" id="GO:0004329">
    <property type="term" value="F:formate-tetrahydrofolate ligase activity"/>
    <property type="evidence" value="ECO:0007669"/>
    <property type="project" value="UniProtKB-UniRule"/>
</dbReference>
<dbReference type="GO" id="GO:0035999">
    <property type="term" value="P:tetrahydrofolate interconversion"/>
    <property type="evidence" value="ECO:0007669"/>
    <property type="project" value="UniProtKB-UniRule"/>
</dbReference>
<dbReference type="CDD" id="cd00477">
    <property type="entry name" value="FTHFS"/>
    <property type="match status" value="1"/>
</dbReference>
<dbReference type="FunFam" id="3.30.1510.10:FF:000001">
    <property type="entry name" value="Formate--tetrahydrofolate ligase"/>
    <property type="match status" value="1"/>
</dbReference>
<dbReference type="FunFam" id="3.10.410.10:FF:000001">
    <property type="entry name" value="Putative formate--tetrahydrofolate ligase"/>
    <property type="match status" value="1"/>
</dbReference>
<dbReference type="Gene3D" id="3.30.1510.10">
    <property type="entry name" value="Domain 2, N(10)-formyltetrahydrofolate synthetase"/>
    <property type="match status" value="1"/>
</dbReference>
<dbReference type="Gene3D" id="3.10.410.10">
    <property type="entry name" value="Formyltetrahydrofolate synthetase, domain 3"/>
    <property type="match status" value="1"/>
</dbReference>
<dbReference type="Gene3D" id="3.40.50.300">
    <property type="entry name" value="P-loop containing nucleotide triphosphate hydrolases"/>
    <property type="match status" value="1"/>
</dbReference>
<dbReference type="HAMAP" id="MF_01543">
    <property type="entry name" value="FTHFS"/>
    <property type="match status" value="1"/>
</dbReference>
<dbReference type="InterPro" id="IPR000559">
    <property type="entry name" value="Formate_THF_ligase"/>
</dbReference>
<dbReference type="InterPro" id="IPR020628">
    <property type="entry name" value="Formate_THF_ligase_CS"/>
</dbReference>
<dbReference type="InterPro" id="IPR027417">
    <property type="entry name" value="P-loop_NTPase"/>
</dbReference>
<dbReference type="NCBIfam" id="NF010030">
    <property type="entry name" value="PRK13505.1"/>
    <property type="match status" value="1"/>
</dbReference>
<dbReference type="Pfam" id="PF01268">
    <property type="entry name" value="FTHFS"/>
    <property type="match status" value="1"/>
</dbReference>
<dbReference type="SUPFAM" id="SSF52540">
    <property type="entry name" value="P-loop containing nucleoside triphosphate hydrolases"/>
    <property type="match status" value="1"/>
</dbReference>
<dbReference type="PROSITE" id="PS00721">
    <property type="entry name" value="FTHFS_1"/>
    <property type="match status" value="1"/>
</dbReference>
<dbReference type="PROSITE" id="PS00722">
    <property type="entry name" value="FTHFS_2"/>
    <property type="match status" value="1"/>
</dbReference>
<protein>
    <recommendedName>
        <fullName evidence="1">Formate--tetrahydrofolate ligase 1</fullName>
        <ecNumber evidence="1">6.3.4.3</ecNumber>
    </recommendedName>
    <alternativeName>
        <fullName evidence="1">Formyltetrahydrofolate synthetase 1</fullName>
        <shortName evidence="1">FHS 1</shortName>
        <shortName evidence="1">FTHFS 1</shortName>
    </alternativeName>
</protein>
<sequence>MKSDIEIAQSVALQPITDIVKKVGIDGDDIELYGKYKAKLSFEKMKAVEANEPGKLLLVTAINPTPAGEGKSTMSIGLADALNQMGKKTMLALREPSLGPVMGIKGGAAGGGYAQVLPMEDINLHFTGDMHAITTANNALSALIDNHLQQGNDLGIDPRRIIWKRVLDLNDRALRQVIVGLGSPVNGVPREDGFDITVASEIMAILCLATDLKDLKKRLADIVVAYTYDRKPVYVRDLKVEGALTLILKDAIKPNLVQTIYGTPALIHGGPFANIAHGCNSVLATSTALRLADYTVTEAGFGADLGAEKFLNIKVPNLPKAPDAIVIVATLRALKMHGGVAKSDLAAENCEAVRLGFANLKRHVENMRQFKVPVVVAINEFVADTEAEIATLKALCEEIKVPVELASVWANGAEGGLALAKTVVRVIDQEAADYKRLYSDEDTLEEKVINIVTQIYGGKAVQFGPKAKTQLKQFTEFGWDKLPVCMAKTQYSFSDNPSLLGAPTDFDITIREFVPKTGAGFIVGLTGDVMTMPGLPKVPAAMAMDVAENGTALGLF</sequence>
<evidence type="ECO:0000255" key="1">
    <source>
        <dbReference type="HAMAP-Rule" id="MF_01543"/>
    </source>
</evidence>
<reference key="1">
    <citation type="journal article" date="2005" name="J. Infect. Dis.">
        <title>Genome sequence of a serotype M28 strain of group A Streptococcus: potential new insights into puerperal sepsis and bacterial disease specificity.</title>
        <authorList>
            <person name="Green N.M."/>
            <person name="Zhang S."/>
            <person name="Porcella S.F."/>
            <person name="Nagiec M.J."/>
            <person name="Barbian K.D."/>
            <person name="Beres S.B."/>
            <person name="Lefebvre R.B."/>
            <person name="Musser J.M."/>
        </authorList>
    </citation>
    <scope>NUCLEOTIDE SEQUENCE [LARGE SCALE GENOMIC DNA]</scope>
    <source>
        <strain>MGAS6180</strain>
    </source>
</reference>
<organism>
    <name type="scientific">Streptococcus pyogenes serotype M28 (strain MGAS6180)</name>
    <dbReference type="NCBI Taxonomy" id="319701"/>
    <lineage>
        <taxon>Bacteria</taxon>
        <taxon>Bacillati</taxon>
        <taxon>Bacillota</taxon>
        <taxon>Bacilli</taxon>
        <taxon>Lactobacillales</taxon>
        <taxon>Streptococcaceae</taxon>
        <taxon>Streptococcus</taxon>
    </lineage>
</organism>
<keyword id="KW-0067">ATP-binding</keyword>
<keyword id="KW-0436">Ligase</keyword>
<keyword id="KW-0547">Nucleotide-binding</keyword>
<keyword id="KW-0554">One-carbon metabolism</keyword>
<gene>
    <name evidence="1" type="primary">fhs1</name>
    <name type="synonym">fhs.1</name>
    <name type="ordered locus">M28_Spy0899</name>
</gene>
<feature type="chain" id="PRO_0000199393" description="Formate--tetrahydrofolate ligase 1">
    <location>
        <begin position="1"/>
        <end position="556"/>
    </location>
</feature>
<feature type="binding site" evidence="1">
    <location>
        <begin position="65"/>
        <end position="72"/>
    </location>
    <ligand>
        <name>ATP</name>
        <dbReference type="ChEBI" id="CHEBI:30616"/>
    </ligand>
</feature>
<comment type="catalytic activity">
    <reaction evidence="1">
        <text>(6S)-5,6,7,8-tetrahydrofolate + formate + ATP = (6R)-10-formyltetrahydrofolate + ADP + phosphate</text>
        <dbReference type="Rhea" id="RHEA:20221"/>
        <dbReference type="ChEBI" id="CHEBI:15740"/>
        <dbReference type="ChEBI" id="CHEBI:30616"/>
        <dbReference type="ChEBI" id="CHEBI:43474"/>
        <dbReference type="ChEBI" id="CHEBI:57453"/>
        <dbReference type="ChEBI" id="CHEBI:195366"/>
        <dbReference type="ChEBI" id="CHEBI:456216"/>
        <dbReference type="EC" id="6.3.4.3"/>
    </reaction>
</comment>
<comment type="pathway">
    <text evidence="1">One-carbon metabolism; tetrahydrofolate interconversion.</text>
</comment>
<comment type="similarity">
    <text evidence="1">Belongs to the formate--tetrahydrofolate ligase family.</text>
</comment>
<accession>Q48TE8</accession>
<proteinExistence type="inferred from homology"/>